<comment type="function">
    <text evidence="1">With S4 and S12 plays an important role in translational accuracy.</text>
</comment>
<comment type="function">
    <text evidence="1">Located at the back of the 30S subunit body where it stabilizes the conformation of the head with respect to the body.</text>
</comment>
<comment type="subunit">
    <text evidence="1">Part of the 30S ribosomal subunit. Contacts proteins S4 and S8.</text>
</comment>
<comment type="domain">
    <text>The N-terminal domain interacts with the head of the 30S subunit; the C-terminal domain interacts with the body and contacts protein S4. The interaction surface between S4 and S5 is involved in control of translational fidelity.</text>
</comment>
<comment type="similarity">
    <text evidence="1">Belongs to the universal ribosomal protein uS5 family.</text>
</comment>
<protein>
    <recommendedName>
        <fullName evidence="1">Small ribosomal subunit protein uS5</fullName>
    </recommendedName>
    <alternativeName>
        <fullName evidence="2">30S ribosomal protein S5</fullName>
    </alternativeName>
</protein>
<organism>
    <name type="scientific">Staphylococcus aureus (strain MRSA252)</name>
    <dbReference type="NCBI Taxonomy" id="282458"/>
    <lineage>
        <taxon>Bacteria</taxon>
        <taxon>Bacillati</taxon>
        <taxon>Bacillota</taxon>
        <taxon>Bacilli</taxon>
        <taxon>Bacillales</taxon>
        <taxon>Staphylococcaceae</taxon>
        <taxon>Staphylococcus</taxon>
    </lineage>
</organism>
<proteinExistence type="inferred from homology"/>
<feature type="chain" id="PRO_0000131596" description="Small ribosomal subunit protein uS5">
    <location>
        <begin position="1"/>
        <end position="166"/>
    </location>
</feature>
<feature type="domain" description="S5 DRBM" evidence="1">
    <location>
        <begin position="11"/>
        <end position="74"/>
    </location>
</feature>
<name>RS5_STAAR</name>
<evidence type="ECO:0000255" key="1">
    <source>
        <dbReference type="HAMAP-Rule" id="MF_01307"/>
    </source>
</evidence>
<evidence type="ECO:0000305" key="2"/>
<accession>Q6GEK0</accession>
<sequence>MARREEETKEFEERVVTINRVAKVVKGGRRFRFTALVVVGDKNGRVGFGTGKAQEVPEAIKKAVEAAKKDLVVVPRVEGTTPHTITGRYGSGSVFMKPAAPGTGVIAGGPVRAVLELAGITDILSKSLGSNTPINMVRATIDGLQNLKNAEDVAKLRGKTVEELYN</sequence>
<reference key="1">
    <citation type="journal article" date="2004" name="Proc. Natl. Acad. Sci. U.S.A.">
        <title>Complete genomes of two clinical Staphylococcus aureus strains: evidence for the rapid evolution of virulence and drug resistance.</title>
        <authorList>
            <person name="Holden M.T.G."/>
            <person name="Feil E.J."/>
            <person name="Lindsay J.A."/>
            <person name="Peacock S.J."/>
            <person name="Day N.P.J."/>
            <person name="Enright M.C."/>
            <person name="Foster T.J."/>
            <person name="Moore C.E."/>
            <person name="Hurst L."/>
            <person name="Atkin R."/>
            <person name="Barron A."/>
            <person name="Bason N."/>
            <person name="Bentley S.D."/>
            <person name="Chillingworth C."/>
            <person name="Chillingworth T."/>
            <person name="Churcher C."/>
            <person name="Clark L."/>
            <person name="Corton C."/>
            <person name="Cronin A."/>
            <person name="Doggett J."/>
            <person name="Dowd L."/>
            <person name="Feltwell T."/>
            <person name="Hance Z."/>
            <person name="Harris B."/>
            <person name="Hauser H."/>
            <person name="Holroyd S."/>
            <person name="Jagels K."/>
            <person name="James K.D."/>
            <person name="Lennard N."/>
            <person name="Line A."/>
            <person name="Mayes R."/>
            <person name="Moule S."/>
            <person name="Mungall K."/>
            <person name="Ormond D."/>
            <person name="Quail M.A."/>
            <person name="Rabbinowitsch E."/>
            <person name="Rutherford K.M."/>
            <person name="Sanders M."/>
            <person name="Sharp S."/>
            <person name="Simmonds M."/>
            <person name="Stevens K."/>
            <person name="Whitehead S."/>
            <person name="Barrell B.G."/>
            <person name="Spratt B.G."/>
            <person name="Parkhill J."/>
        </authorList>
    </citation>
    <scope>NUCLEOTIDE SEQUENCE [LARGE SCALE GENOMIC DNA]</scope>
    <source>
        <strain>MRSA252</strain>
    </source>
</reference>
<keyword id="KW-0687">Ribonucleoprotein</keyword>
<keyword id="KW-0689">Ribosomal protein</keyword>
<keyword id="KW-0694">RNA-binding</keyword>
<keyword id="KW-0699">rRNA-binding</keyword>
<gene>
    <name evidence="1" type="primary">rpsE</name>
    <name type="ordered locus">SAR2318</name>
</gene>
<dbReference type="EMBL" id="BX571856">
    <property type="protein sequence ID" value="CAG41299.1"/>
    <property type="molecule type" value="Genomic_DNA"/>
</dbReference>
<dbReference type="RefSeq" id="WP_000113851.1">
    <property type="nucleotide sequence ID" value="NC_002952.2"/>
</dbReference>
<dbReference type="SMR" id="Q6GEK0"/>
<dbReference type="KEGG" id="sar:SAR2318"/>
<dbReference type="HOGENOM" id="CLU_065898_2_2_9"/>
<dbReference type="Proteomes" id="UP000000596">
    <property type="component" value="Chromosome"/>
</dbReference>
<dbReference type="GO" id="GO:0015935">
    <property type="term" value="C:small ribosomal subunit"/>
    <property type="evidence" value="ECO:0007669"/>
    <property type="project" value="InterPro"/>
</dbReference>
<dbReference type="GO" id="GO:0019843">
    <property type="term" value="F:rRNA binding"/>
    <property type="evidence" value="ECO:0007669"/>
    <property type="project" value="UniProtKB-UniRule"/>
</dbReference>
<dbReference type="GO" id="GO:0003735">
    <property type="term" value="F:structural constituent of ribosome"/>
    <property type="evidence" value="ECO:0007669"/>
    <property type="project" value="InterPro"/>
</dbReference>
<dbReference type="GO" id="GO:0006412">
    <property type="term" value="P:translation"/>
    <property type="evidence" value="ECO:0007669"/>
    <property type="project" value="UniProtKB-UniRule"/>
</dbReference>
<dbReference type="FunFam" id="3.30.160.20:FF:000001">
    <property type="entry name" value="30S ribosomal protein S5"/>
    <property type="match status" value="1"/>
</dbReference>
<dbReference type="FunFam" id="3.30.230.10:FF:000002">
    <property type="entry name" value="30S ribosomal protein S5"/>
    <property type="match status" value="1"/>
</dbReference>
<dbReference type="Gene3D" id="3.30.160.20">
    <property type="match status" value="1"/>
</dbReference>
<dbReference type="Gene3D" id="3.30.230.10">
    <property type="match status" value="1"/>
</dbReference>
<dbReference type="HAMAP" id="MF_01307_B">
    <property type="entry name" value="Ribosomal_uS5_B"/>
    <property type="match status" value="1"/>
</dbReference>
<dbReference type="InterPro" id="IPR020568">
    <property type="entry name" value="Ribosomal_Su5_D2-typ_SF"/>
</dbReference>
<dbReference type="InterPro" id="IPR000851">
    <property type="entry name" value="Ribosomal_uS5"/>
</dbReference>
<dbReference type="InterPro" id="IPR005712">
    <property type="entry name" value="Ribosomal_uS5_bac-type"/>
</dbReference>
<dbReference type="InterPro" id="IPR005324">
    <property type="entry name" value="Ribosomal_uS5_C"/>
</dbReference>
<dbReference type="InterPro" id="IPR013810">
    <property type="entry name" value="Ribosomal_uS5_N"/>
</dbReference>
<dbReference type="InterPro" id="IPR018192">
    <property type="entry name" value="Ribosomal_uS5_N_CS"/>
</dbReference>
<dbReference type="InterPro" id="IPR014721">
    <property type="entry name" value="Ribsml_uS5_D2-typ_fold_subgr"/>
</dbReference>
<dbReference type="NCBIfam" id="TIGR01021">
    <property type="entry name" value="rpsE_bact"/>
    <property type="match status" value="1"/>
</dbReference>
<dbReference type="PANTHER" id="PTHR48277">
    <property type="entry name" value="MITOCHONDRIAL RIBOSOMAL PROTEIN S5"/>
    <property type="match status" value="1"/>
</dbReference>
<dbReference type="PANTHER" id="PTHR48277:SF1">
    <property type="entry name" value="MITOCHONDRIAL RIBOSOMAL PROTEIN S5"/>
    <property type="match status" value="1"/>
</dbReference>
<dbReference type="Pfam" id="PF00333">
    <property type="entry name" value="Ribosomal_S5"/>
    <property type="match status" value="1"/>
</dbReference>
<dbReference type="Pfam" id="PF03719">
    <property type="entry name" value="Ribosomal_S5_C"/>
    <property type="match status" value="1"/>
</dbReference>
<dbReference type="SUPFAM" id="SSF54768">
    <property type="entry name" value="dsRNA-binding domain-like"/>
    <property type="match status" value="1"/>
</dbReference>
<dbReference type="SUPFAM" id="SSF54211">
    <property type="entry name" value="Ribosomal protein S5 domain 2-like"/>
    <property type="match status" value="1"/>
</dbReference>
<dbReference type="PROSITE" id="PS00585">
    <property type="entry name" value="RIBOSOMAL_S5"/>
    <property type="match status" value="1"/>
</dbReference>
<dbReference type="PROSITE" id="PS50881">
    <property type="entry name" value="S5_DSRBD"/>
    <property type="match status" value="1"/>
</dbReference>